<dbReference type="EC" id="1.4.4.2" evidence="1"/>
<dbReference type="EMBL" id="CP000227">
    <property type="protein sequence ID" value="ACM14439.1"/>
    <property type="molecule type" value="Genomic_DNA"/>
</dbReference>
<dbReference type="SMR" id="B9IXL8"/>
<dbReference type="KEGG" id="bcq:BCQ_4011"/>
<dbReference type="HOGENOM" id="CLU_004620_0_2_9"/>
<dbReference type="Proteomes" id="UP000000441">
    <property type="component" value="Chromosome"/>
</dbReference>
<dbReference type="GO" id="GO:0004375">
    <property type="term" value="F:glycine dehydrogenase (decarboxylating) activity"/>
    <property type="evidence" value="ECO:0007669"/>
    <property type="project" value="UniProtKB-EC"/>
</dbReference>
<dbReference type="GO" id="GO:0019464">
    <property type="term" value="P:glycine decarboxylation via glycine cleavage system"/>
    <property type="evidence" value="ECO:0007669"/>
    <property type="project" value="UniProtKB-UniRule"/>
</dbReference>
<dbReference type="GO" id="GO:0009116">
    <property type="term" value="P:nucleoside metabolic process"/>
    <property type="evidence" value="ECO:0007669"/>
    <property type="project" value="InterPro"/>
</dbReference>
<dbReference type="CDD" id="cd00613">
    <property type="entry name" value="GDC-P"/>
    <property type="match status" value="1"/>
</dbReference>
<dbReference type="FunFam" id="3.40.640.10:FF:000113">
    <property type="entry name" value="Probable glycine dehydrogenase (decarboxylating) subunit 1"/>
    <property type="match status" value="1"/>
</dbReference>
<dbReference type="Gene3D" id="3.90.1150.10">
    <property type="entry name" value="Aspartate Aminotransferase, domain 1"/>
    <property type="match status" value="1"/>
</dbReference>
<dbReference type="Gene3D" id="3.40.640.10">
    <property type="entry name" value="Type I PLP-dependent aspartate aminotransferase-like (Major domain)"/>
    <property type="match status" value="1"/>
</dbReference>
<dbReference type="HAMAP" id="MF_00712">
    <property type="entry name" value="GcvPA"/>
    <property type="match status" value="1"/>
</dbReference>
<dbReference type="InterPro" id="IPR023010">
    <property type="entry name" value="GcvPA"/>
</dbReference>
<dbReference type="InterPro" id="IPR049315">
    <property type="entry name" value="GDC-P_N"/>
</dbReference>
<dbReference type="InterPro" id="IPR020581">
    <property type="entry name" value="GDC_P"/>
</dbReference>
<dbReference type="InterPro" id="IPR015424">
    <property type="entry name" value="PyrdxlP-dep_Trfase"/>
</dbReference>
<dbReference type="InterPro" id="IPR015421">
    <property type="entry name" value="PyrdxlP-dep_Trfase_major"/>
</dbReference>
<dbReference type="InterPro" id="IPR015422">
    <property type="entry name" value="PyrdxlP-dep_Trfase_small"/>
</dbReference>
<dbReference type="NCBIfam" id="NF001696">
    <property type="entry name" value="PRK00451.1"/>
    <property type="match status" value="1"/>
</dbReference>
<dbReference type="PANTHER" id="PTHR42806">
    <property type="entry name" value="GLYCINE CLEAVAGE SYSTEM P-PROTEIN"/>
    <property type="match status" value="1"/>
</dbReference>
<dbReference type="PANTHER" id="PTHR42806:SF1">
    <property type="entry name" value="GLYCINE DEHYDROGENASE (DECARBOXYLATING)"/>
    <property type="match status" value="1"/>
</dbReference>
<dbReference type="Pfam" id="PF02347">
    <property type="entry name" value="GDC-P"/>
    <property type="match status" value="1"/>
</dbReference>
<dbReference type="PIRSF" id="PIRSF006815">
    <property type="entry name" value="GcvPA"/>
    <property type="match status" value="1"/>
</dbReference>
<dbReference type="SUPFAM" id="SSF53383">
    <property type="entry name" value="PLP-dependent transferases"/>
    <property type="match status" value="1"/>
</dbReference>
<feature type="chain" id="PRO_1000147978" description="Probable glycine dehydrogenase (decarboxylating) subunit 1">
    <location>
        <begin position="1"/>
        <end position="447"/>
    </location>
</feature>
<proteinExistence type="inferred from homology"/>
<comment type="function">
    <text evidence="1">The glycine cleavage system catalyzes the degradation of glycine. The P protein binds the alpha-amino group of glycine through its pyridoxal phosphate cofactor; CO(2) is released and the remaining methylamine moiety is then transferred to the lipoamide cofactor of the H protein.</text>
</comment>
<comment type="catalytic activity">
    <reaction evidence="1">
        <text>N(6)-[(R)-lipoyl]-L-lysyl-[glycine-cleavage complex H protein] + glycine + H(+) = N(6)-[(R)-S(8)-aminomethyldihydrolipoyl]-L-lysyl-[glycine-cleavage complex H protein] + CO2</text>
        <dbReference type="Rhea" id="RHEA:24304"/>
        <dbReference type="Rhea" id="RHEA-COMP:10494"/>
        <dbReference type="Rhea" id="RHEA-COMP:10495"/>
        <dbReference type="ChEBI" id="CHEBI:15378"/>
        <dbReference type="ChEBI" id="CHEBI:16526"/>
        <dbReference type="ChEBI" id="CHEBI:57305"/>
        <dbReference type="ChEBI" id="CHEBI:83099"/>
        <dbReference type="ChEBI" id="CHEBI:83143"/>
        <dbReference type="EC" id="1.4.4.2"/>
    </reaction>
</comment>
<comment type="subunit">
    <text evidence="1">The glycine cleavage system is composed of four proteins: P, T, L and H. In this organism, the P 'protein' is a heterodimer of two subunits.</text>
</comment>
<comment type="similarity">
    <text evidence="1">Belongs to the GcvP family. N-terminal subunit subfamily.</text>
</comment>
<sequence length="447" mass="49407">MLHRYLPMTEEDKKEMLQTIGVQTIDELFSDIPESVRFKGDLKIKEAKSEPELLKELSQMASKNANLKEYASFLGAGVYDHYAPVIVDHVISRSEFYTAYTPYQPEISQGELQAIFEFQTMICELTGMDVANSSMYDGGTALAEAAMLAAGHTRKKKILVSSAVHPESRAVLETYAKGQHLEVVEINHKDGVTDLDVLQSEVDDTVACVIVQYPNFFGQVEKLADIEKIVHQQKSLFIVSSNPLSLGALTPPGKFGADIVIGDAQPFGIPTQFGGPHCGYFATTKAFMRKIPGRLVGQTVDSDGKRGFVLTLQAREQHIRRDKATSNICSNQALNALAASVAMTALGKQGVKEMARQNISKAQYAKRQFEAKGFTVTFAGPFFNEFVVDCKRPVKEVNDALLQKNIIGGYDLGRDYKEHENHMLVAVTELRTKDEIDTLVNEMGAIQ</sequence>
<evidence type="ECO:0000255" key="1">
    <source>
        <dbReference type="HAMAP-Rule" id="MF_00712"/>
    </source>
</evidence>
<organism>
    <name type="scientific">Bacillus cereus (strain Q1)</name>
    <dbReference type="NCBI Taxonomy" id="361100"/>
    <lineage>
        <taxon>Bacteria</taxon>
        <taxon>Bacillati</taxon>
        <taxon>Bacillota</taxon>
        <taxon>Bacilli</taxon>
        <taxon>Bacillales</taxon>
        <taxon>Bacillaceae</taxon>
        <taxon>Bacillus</taxon>
        <taxon>Bacillus cereus group</taxon>
    </lineage>
</organism>
<gene>
    <name evidence="1" type="primary">gcvPA</name>
    <name type="ordered locus">BCQ_4011</name>
</gene>
<accession>B9IXL8</accession>
<name>GCSPA_BACCQ</name>
<protein>
    <recommendedName>
        <fullName evidence="1">Probable glycine dehydrogenase (decarboxylating) subunit 1</fullName>
        <ecNumber evidence="1">1.4.4.2</ecNumber>
    </recommendedName>
    <alternativeName>
        <fullName evidence="1">Glycine cleavage system P-protein subunit 1</fullName>
    </alternativeName>
    <alternativeName>
        <fullName evidence="1">Glycine decarboxylase subunit 1</fullName>
    </alternativeName>
    <alternativeName>
        <fullName evidence="1">Glycine dehydrogenase (aminomethyl-transferring) subunit 1</fullName>
    </alternativeName>
</protein>
<reference key="1">
    <citation type="journal article" date="2009" name="J. Bacteriol.">
        <title>Complete genome sequence of the extremophilic Bacillus cereus strain Q1 with industrial applications.</title>
        <authorList>
            <person name="Xiong Z."/>
            <person name="Jiang Y."/>
            <person name="Qi D."/>
            <person name="Lu H."/>
            <person name="Yang F."/>
            <person name="Yang J."/>
            <person name="Chen L."/>
            <person name="Sun L."/>
            <person name="Xu X."/>
            <person name="Xue Y."/>
            <person name="Zhu Y."/>
            <person name="Jin Q."/>
        </authorList>
    </citation>
    <scope>NUCLEOTIDE SEQUENCE [LARGE SCALE GENOMIC DNA]</scope>
    <source>
        <strain>Q1</strain>
    </source>
</reference>
<keyword id="KW-0560">Oxidoreductase</keyword>